<feature type="chain" id="PRO_0000091565" description="Pre-mRNA-splicing factor SNU114">
    <location>
        <begin position="1"/>
        <end position="1008"/>
    </location>
</feature>
<feature type="domain" description="tr-type G" evidence="2">
    <location>
        <begin position="131"/>
        <end position="338"/>
    </location>
</feature>
<feature type="region of interest" description="G1" evidence="2">
    <location>
        <begin position="140"/>
        <end position="147"/>
    </location>
</feature>
<feature type="region of interest" description="G2" evidence="2">
    <location>
        <begin position="188"/>
        <end position="192"/>
    </location>
</feature>
<feature type="region of interest" description="G3" evidence="2">
    <location>
        <begin position="214"/>
        <end position="217"/>
    </location>
</feature>
<feature type="region of interest" description="G4" evidence="2">
    <location>
        <begin position="268"/>
        <end position="271"/>
    </location>
</feature>
<feature type="region of interest" description="G5" evidence="2">
    <location>
        <begin position="315"/>
        <end position="317"/>
    </location>
</feature>
<feature type="region of interest" description="Disordered" evidence="3">
    <location>
        <begin position="504"/>
        <end position="536"/>
    </location>
</feature>
<feature type="compositionally biased region" description="Basic and acidic residues" evidence="3">
    <location>
        <begin position="509"/>
        <end position="520"/>
    </location>
</feature>
<feature type="compositionally biased region" description="Acidic residues" evidence="3">
    <location>
        <begin position="524"/>
        <end position="536"/>
    </location>
</feature>
<feature type="binding site" evidence="1">
    <location>
        <begin position="140"/>
        <end position="147"/>
    </location>
    <ligand>
        <name>GTP</name>
        <dbReference type="ChEBI" id="CHEBI:37565"/>
    </ligand>
</feature>
<feature type="binding site" evidence="1">
    <location>
        <begin position="214"/>
        <end position="218"/>
    </location>
    <ligand>
        <name>GTP</name>
        <dbReference type="ChEBI" id="CHEBI:37565"/>
    </ligand>
</feature>
<feature type="binding site" evidence="1">
    <location>
        <begin position="268"/>
        <end position="271"/>
    </location>
    <ligand>
        <name>GTP</name>
        <dbReference type="ChEBI" id="CHEBI:37565"/>
    </ligand>
</feature>
<feature type="modified residue" description="Phosphoserine" evidence="11">
    <location>
        <position position="85"/>
    </location>
</feature>
<feature type="modified residue" description="Phosphothreonine" evidence="9 10 11">
    <location>
        <position position="88"/>
    </location>
</feature>
<feature type="helix" evidence="14">
    <location>
        <begin position="69"/>
        <end position="71"/>
    </location>
</feature>
<feature type="strand" evidence="16">
    <location>
        <begin position="74"/>
        <end position="78"/>
    </location>
</feature>
<feature type="strand" evidence="13">
    <location>
        <begin position="86"/>
        <end position="88"/>
    </location>
</feature>
<feature type="turn" evidence="16">
    <location>
        <begin position="101"/>
        <end position="103"/>
    </location>
</feature>
<feature type="helix" evidence="16">
    <location>
        <begin position="110"/>
        <end position="112"/>
    </location>
</feature>
<feature type="strand" evidence="16">
    <location>
        <begin position="116"/>
        <end position="118"/>
    </location>
</feature>
<feature type="helix" evidence="16">
    <location>
        <begin position="120"/>
        <end position="126"/>
    </location>
</feature>
<feature type="helix" evidence="16">
    <location>
        <begin position="130"/>
        <end position="132"/>
    </location>
</feature>
<feature type="strand" evidence="16">
    <location>
        <begin position="133"/>
        <end position="139"/>
    </location>
</feature>
<feature type="helix" evidence="16">
    <location>
        <begin position="146"/>
        <end position="157"/>
    </location>
</feature>
<feature type="helix" evidence="16">
    <location>
        <begin position="166"/>
        <end position="169"/>
    </location>
</feature>
<feature type="strand" evidence="14">
    <location>
        <begin position="170"/>
        <end position="173"/>
    </location>
</feature>
<feature type="turn" evidence="13">
    <location>
        <begin position="177"/>
        <end position="179"/>
    </location>
</feature>
<feature type="helix" evidence="16">
    <location>
        <begin position="182"/>
        <end position="187"/>
    </location>
</feature>
<feature type="strand" evidence="16">
    <location>
        <begin position="194"/>
        <end position="201"/>
    </location>
</feature>
<feature type="strand" evidence="16">
    <location>
        <begin position="207"/>
        <end position="214"/>
    </location>
</feature>
<feature type="helix" evidence="16">
    <location>
        <begin position="219"/>
        <end position="221"/>
    </location>
</feature>
<feature type="helix" evidence="16">
    <location>
        <begin position="222"/>
        <end position="231"/>
    </location>
</feature>
<feature type="strand" evidence="16">
    <location>
        <begin position="233"/>
        <end position="240"/>
    </location>
</feature>
<feature type="turn" evidence="16">
    <location>
        <begin position="241"/>
        <end position="243"/>
    </location>
</feature>
<feature type="helix" evidence="16">
    <location>
        <begin position="247"/>
        <end position="258"/>
    </location>
</feature>
<feature type="strand" evidence="16">
    <location>
        <begin position="262"/>
        <end position="268"/>
    </location>
</feature>
<feature type="helix" evidence="16">
    <location>
        <begin position="271"/>
        <end position="274"/>
    </location>
</feature>
<feature type="turn" evidence="12">
    <location>
        <begin position="275"/>
        <end position="277"/>
    </location>
</feature>
<feature type="helix" evidence="16">
    <location>
        <begin position="281"/>
        <end position="298"/>
    </location>
</feature>
<feature type="strand" evidence="14">
    <location>
        <begin position="299"/>
        <end position="301"/>
    </location>
</feature>
<feature type="turn" evidence="16">
    <location>
        <begin position="306"/>
        <end position="309"/>
    </location>
</feature>
<feature type="strand" evidence="16">
    <location>
        <begin position="311"/>
        <end position="315"/>
    </location>
</feature>
<feature type="turn" evidence="16">
    <location>
        <begin position="316"/>
        <end position="319"/>
    </location>
</feature>
<feature type="strand" evidence="16">
    <location>
        <begin position="320"/>
        <end position="322"/>
    </location>
</feature>
<feature type="helix" evidence="16">
    <location>
        <begin position="324"/>
        <end position="331"/>
    </location>
</feature>
<feature type="helix" evidence="16">
    <location>
        <begin position="333"/>
        <end position="335"/>
    </location>
</feature>
<feature type="helix" evidence="16">
    <location>
        <begin position="338"/>
        <end position="340"/>
    </location>
</feature>
<feature type="helix" evidence="16">
    <location>
        <begin position="341"/>
        <end position="345"/>
    </location>
</feature>
<feature type="strand" evidence="16">
    <location>
        <begin position="348"/>
        <end position="351"/>
    </location>
</feature>
<feature type="strand" evidence="16">
    <location>
        <begin position="353"/>
        <end position="362"/>
    </location>
</feature>
<feature type="turn" evidence="16">
    <location>
        <begin position="365"/>
        <end position="367"/>
    </location>
</feature>
<feature type="helix" evidence="16">
    <location>
        <begin position="372"/>
        <end position="376"/>
    </location>
</feature>
<feature type="helix" evidence="16">
    <location>
        <begin position="378"/>
        <end position="390"/>
    </location>
</feature>
<feature type="helix" evidence="16">
    <location>
        <begin position="393"/>
        <end position="403"/>
    </location>
</feature>
<feature type="helix" evidence="16">
    <location>
        <begin position="412"/>
        <end position="414"/>
    </location>
</feature>
<feature type="helix" evidence="16">
    <location>
        <begin position="417"/>
        <end position="429"/>
    </location>
</feature>
<feature type="helix" evidence="16">
    <location>
        <begin position="433"/>
        <end position="442"/>
    </location>
</feature>
<feature type="helix" evidence="16">
    <location>
        <begin position="445"/>
        <end position="447"/>
    </location>
</feature>
<feature type="helix" evidence="16">
    <location>
        <begin position="449"/>
        <end position="456"/>
    </location>
</feature>
<feature type="strand" evidence="16">
    <location>
        <begin position="467"/>
        <end position="478"/>
    </location>
</feature>
<feature type="strand" evidence="16">
    <location>
        <begin position="481"/>
        <end position="494"/>
    </location>
</feature>
<feature type="strand" evidence="16">
    <location>
        <begin position="498"/>
        <end position="503"/>
    </location>
</feature>
<feature type="helix" evidence="16">
    <location>
        <begin position="504"/>
        <end position="506"/>
    </location>
</feature>
<feature type="helix" evidence="16">
    <location>
        <begin position="507"/>
        <end position="515"/>
    </location>
</feature>
<feature type="strand" evidence="16">
    <location>
        <begin position="536"/>
        <end position="538"/>
    </location>
</feature>
<feature type="strand" evidence="16">
    <location>
        <begin position="541"/>
        <end position="548"/>
    </location>
</feature>
<feature type="strand" evidence="16">
    <location>
        <begin position="550"/>
        <end position="552"/>
    </location>
</feature>
<feature type="strand" evidence="16">
    <location>
        <begin position="554"/>
        <end position="557"/>
    </location>
</feature>
<feature type="strand" evidence="16">
    <location>
        <begin position="561"/>
        <end position="566"/>
    </location>
</feature>
<feature type="helix" evidence="16">
    <location>
        <begin position="568"/>
        <end position="570"/>
    </location>
</feature>
<feature type="strand" evidence="16">
    <location>
        <begin position="575"/>
        <end position="579"/>
    </location>
</feature>
<feature type="strand" evidence="15">
    <location>
        <begin position="582"/>
        <end position="584"/>
    </location>
</feature>
<feature type="helix" evidence="16">
    <location>
        <begin position="585"/>
        <end position="588"/>
    </location>
</feature>
<feature type="strand" evidence="16">
    <location>
        <begin position="603"/>
        <end position="611"/>
    </location>
</feature>
<feature type="helix" evidence="16">
    <location>
        <begin position="612"/>
        <end position="614"/>
    </location>
</feature>
<feature type="helix" evidence="16">
    <location>
        <begin position="615"/>
        <end position="628"/>
    </location>
</feature>
<feature type="strand" evidence="16">
    <location>
        <begin position="633"/>
        <end position="636"/>
    </location>
</feature>
<feature type="strand" evidence="15">
    <location>
        <begin position="638"/>
        <end position="640"/>
    </location>
</feature>
<feature type="strand" evidence="16">
    <location>
        <begin position="642"/>
        <end position="648"/>
    </location>
</feature>
<feature type="helix" evidence="16">
    <location>
        <begin position="649"/>
        <end position="661"/>
    </location>
</feature>
<feature type="strand" evidence="16">
    <location>
        <begin position="668"/>
        <end position="670"/>
    </location>
</feature>
<feature type="strand" evidence="16">
    <location>
        <begin position="678"/>
        <end position="683"/>
    </location>
</feature>
<feature type="strand" evidence="16">
    <location>
        <begin position="710"/>
        <end position="714"/>
    </location>
</feature>
<feature type="helix" evidence="16">
    <location>
        <begin position="717"/>
        <end position="724"/>
    </location>
</feature>
<feature type="strand" evidence="15">
    <location>
        <begin position="727"/>
        <end position="730"/>
    </location>
</feature>
<feature type="strand" evidence="15">
    <location>
        <begin position="733"/>
        <end position="736"/>
    </location>
</feature>
<feature type="helix" evidence="15">
    <location>
        <begin position="737"/>
        <end position="739"/>
    </location>
</feature>
<feature type="turn" evidence="15">
    <location>
        <begin position="740"/>
        <end position="742"/>
    </location>
</feature>
<feature type="helix" evidence="16">
    <location>
        <begin position="744"/>
        <end position="754"/>
    </location>
</feature>
<feature type="helix" evidence="16">
    <location>
        <begin position="761"/>
        <end position="764"/>
    </location>
</feature>
<feature type="strand" evidence="16">
    <location>
        <begin position="765"/>
        <end position="769"/>
    </location>
</feature>
<feature type="strand" evidence="16">
    <location>
        <begin position="772"/>
        <end position="775"/>
    </location>
</feature>
<feature type="turn" evidence="15">
    <location>
        <begin position="780"/>
        <end position="782"/>
    </location>
</feature>
<feature type="helix" evidence="16">
    <location>
        <begin position="785"/>
        <end position="789"/>
    </location>
</feature>
<feature type="helix" evidence="16">
    <location>
        <begin position="792"/>
        <end position="803"/>
    </location>
</feature>
<feature type="turn" evidence="16">
    <location>
        <begin position="807"/>
        <end position="809"/>
    </location>
</feature>
<feature type="strand" evidence="16">
    <location>
        <begin position="815"/>
        <end position="820"/>
    </location>
</feature>
<feature type="helix" evidence="16">
    <location>
        <begin position="835"/>
        <end position="851"/>
    </location>
</feature>
<feature type="strand" evidence="16">
    <location>
        <begin position="855"/>
        <end position="869"/>
    </location>
</feature>
<feature type="helix" evidence="16">
    <location>
        <begin position="870"/>
        <end position="872"/>
    </location>
</feature>
<feature type="helix" evidence="16">
    <location>
        <begin position="873"/>
        <end position="882"/>
    </location>
</feature>
<feature type="strand" evidence="14">
    <location>
        <begin position="883"/>
        <end position="885"/>
    </location>
</feature>
<feature type="strand" evidence="16">
    <location>
        <begin position="887"/>
        <end position="893"/>
    </location>
</feature>
<feature type="strand" evidence="16">
    <location>
        <begin position="897"/>
        <end position="907"/>
    </location>
</feature>
<feature type="helix" evidence="16">
    <location>
        <begin position="908"/>
        <end position="910"/>
    </location>
</feature>
<feature type="helix" evidence="16">
    <location>
        <begin position="914"/>
        <end position="921"/>
    </location>
</feature>
<feature type="turn" evidence="16">
    <location>
        <begin position="922"/>
        <end position="924"/>
    </location>
</feature>
<feature type="strand" evidence="16">
    <location>
        <begin position="925"/>
        <end position="939"/>
    </location>
</feature>
<feature type="strand" evidence="16">
    <location>
        <begin position="953"/>
        <end position="955"/>
    </location>
</feature>
<feature type="helix" evidence="16">
    <location>
        <begin position="959"/>
        <end position="961"/>
    </location>
</feature>
<feature type="helix" evidence="16">
    <location>
        <begin position="962"/>
        <end position="974"/>
    </location>
</feature>
<feature type="strand" evidence="14">
    <location>
        <begin position="980"/>
        <end position="982"/>
    </location>
</feature>
<feature type="helix" evidence="16">
    <location>
        <begin position="989"/>
        <end position="991"/>
    </location>
</feature>
<feature type="helix" evidence="16">
    <location>
        <begin position="995"/>
        <end position="1003"/>
    </location>
</feature>
<comment type="function">
    <text>Component of the U5 snRNP complex required for pre-mRNA splicing. Binds GTP.</text>
</comment>
<comment type="subunit">
    <text evidence="4 5 7 8">Belongs to the CWC complex (or CEF1-associated complex), a spliceosome sub-complex reminiscent of a late-stage spliceosome composed of the U2, U5 and U6 snRNAs and at least BUD13, BUD31, BRR2, CDC40, CEF1, CLF1, CUS1, CWC2, CWC15, CWC21, CWC22, CWC23, CWC24, CWC25, CWC27, ECM2, HSH155, IST3, ISY1, LEA1, MSL1, NTC20, PRP8, PRP9, PRP11, PRP19, PRP21, PRP22, PRP45, PRP46, SLU7, SMB1, SMD1, SMD2, SMD3, SMX2, SMX3, SNT309, SNU114, SPP2, SYF1, SYF2, RSE1 and YJU2. Component of the U4/U6-U5 tri-snRNP complex composed of the U4, U6 and U5 snRNAs and at least PRP3, PRP4, PRP6, PRP8, PRP18, PRP31, PRP38, SNU13, SNU23, SNU66, SNU114, SPP381, SMB1, SMD1, SMD2, SMD3, SMX2, SMX3, LSM2, LSM3, LSM4, LSM5, LSM6, LSM7, LSM8, BRR2 and DIB1. Interacts (via C-terminus) with CWC21. Interacts (via N-terminus) with PRP8 (via SCwid domain).</text>
</comment>
<comment type="interaction">
    <interactant intactId="EBI-243">
        <id>P36048</id>
    </interactant>
    <interactant intactId="EBI-340">
        <id>P32357</id>
        <label>AAR2</label>
    </interactant>
    <organismsDiffer>false</organismsDiffer>
    <experiments>4</experiments>
</comment>
<comment type="interaction">
    <interactant intactId="EBI-243">
        <id>P36048</id>
    </interactant>
    <interactant intactId="EBI-861">
        <id>P32639</id>
        <label>BRR2</label>
    </interactant>
    <organismsDiffer>false</organismsDiffer>
    <experiments>15</experiments>
</comment>
<comment type="subcellular location">
    <subcellularLocation>
        <location>Nucleus</location>
    </subcellularLocation>
</comment>
<comment type="miscellaneous">
    <text evidence="6">Present with 300 molecules/cell in log phase SD medium.</text>
</comment>
<comment type="similarity">
    <text evidence="2">Belongs to the TRAFAC class translation factor GTPase superfamily. Classic translation factor GTPase family. EF-G/EF-2 subfamily.</text>
</comment>
<keyword id="KW-0002">3D-structure</keyword>
<keyword id="KW-0342">GTP-binding</keyword>
<keyword id="KW-0507">mRNA processing</keyword>
<keyword id="KW-0508">mRNA splicing</keyword>
<keyword id="KW-0547">Nucleotide-binding</keyword>
<keyword id="KW-0539">Nucleus</keyword>
<keyword id="KW-0597">Phosphoprotein</keyword>
<keyword id="KW-1185">Reference proteome</keyword>
<gene>
    <name type="primary">SNU114</name>
    <name type="synonym">GIN10</name>
    <name type="ordered locus">YKL173W</name>
    <name type="ORF">YKL637</name>
</gene>
<evidence type="ECO:0000250" key="1"/>
<evidence type="ECO:0000255" key="2">
    <source>
        <dbReference type="PROSITE-ProRule" id="PRU01059"/>
    </source>
</evidence>
<evidence type="ECO:0000256" key="3">
    <source>
        <dbReference type="SAM" id="MobiDB-lite"/>
    </source>
</evidence>
<evidence type="ECO:0000269" key="4">
    <source>
    </source>
</evidence>
<evidence type="ECO:0000269" key="5">
    <source>
    </source>
</evidence>
<evidence type="ECO:0000269" key="6">
    <source>
    </source>
</evidence>
<evidence type="ECO:0000269" key="7">
    <source>
    </source>
</evidence>
<evidence type="ECO:0000269" key="8">
    <source>
    </source>
</evidence>
<evidence type="ECO:0007744" key="9">
    <source>
    </source>
</evidence>
<evidence type="ECO:0007744" key="10">
    <source>
    </source>
</evidence>
<evidence type="ECO:0007744" key="11">
    <source>
    </source>
</evidence>
<evidence type="ECO:0007829" key="12">
    <source>
        <dbReference type="PDB" id="5GMK"/>
    </source>
</evidence>
<evidence type="ECO:0007829" key="13">
    <source>
        <dbReference type="PDB" id="6BK8"/>
    </source>
</evidence>
<evidence type="ECO:0007829" key="14">
    <source>
        <dbReference type="PDB" id="6J6G"/>
    </source>
</evidence>
<evidence type="ECO:0007829" key="15">
    <source>
        <dbReference type="PDB" id="6TEO"/>
    </source>
</evidence>
<evidence type="ECO:0007829" key="16">
    <source>
        <dbReference type="PDB" id="9DTR"/>
    </source>
</evidence>
<name>SN114_YEAST</name>
<reference key="1">
    <citation type="journal article" date="1994" name="Yeast">
        <title>Sequencing and analysis of a 20.5 kb DNA segment located on the left arm of yeast chromosome XI.</title>
        <authorList>
            <person name="Vandenbol M."/>
            <person name="Bolle P.-A."/>
            <person name="Dion C."/>
            <person name="Portetelle D."/>
            <person name="Hilger F."/>
        </authorList>
    </citation>
    <scope>NUCLEOTIDE SEQUENCE [GENOMIC DNA]</scope>
    <source>
        <strain>ATCC 204508 / S288c</strain>
    </source>
</reference>
<reference key="2">
    <citation type="journal article" date="1994" name="Nature">
        <title>Complete DNA sequence of yeast chromosome XI.</title>
        <authorList>
            <person name="Dujon B."/>
            <person name="Alexandraki D."/>
            <person name="Andre B."/>
            <person name="Ansorge W."/>
            <person name="Baladron V."/>
            <person name="Ballesta J.P.G."/>
            <person name="Banrevi A."/>
            <person name="Bolle P.-A."/>
            <person name="Bolotin-Fukuhara M."/>
            <person name="Bossier P."/>
            <person name="Bou G."/>
            <person name="Boyer J."/>
            <person name="Buitrago M.J."/>
            <person name="Cheret G."/>
            <person name="Colleaux L."/>
            <person name="Daignan-Fornier B."/>
            <person name="del Rey F."/>
            <person name="Dion C."/>
            <person name="Domdey H."/>
            <person name="Duesterhoeft A."/>
            <person name="Duesterhus S."/>
            <person name="Entian K.-D."/>
            <person name="Erfle H."/>
            <person name="Esteban P.F."/>
            <person name="Feldmann H."/>
            <person name="Fernandes L."/>
            <person name="Fobo G.M."/>
            <person name="Fritz C."/>
            <person name="Fukuhara H."/>
            <person name="Gabel C."/>
            <person name="Gaillon L."/>
            <person name="Garcia-Cantalejo J.M."/>
            <person name="Garcia-Ramirez J.J."/>
            <person name="Gent M.E."/>
            <person name="Ghazvini M."/>
            <person name="Goffeau A."/>
            <person name="Gonzalez A."/>
            <person name="Grothues D."/>
            <person name="Guerreiro P."/>
            <person name="Hegemann J.H."/>
            <person name="Hewitt N."/>
            <person name="Hilger F."/>
            <person name="Hollenberg C.P."/>
            <person name="Horaitis O."/>
            <person name="Indge K.J."/>
            <person name="Jacquier A."/>
            <person name="James C.M."/>
            <person name="Jauniaux J.-C."/>
            <person name="Jimenez A."/>
            <person name="Keuchel H."/>
            <person name="Kirchrath L."/>
            <person name="Kleine K."/>
            <person name="Koetter P."/>
            <person name="Legrain P."/>
            <person name="Liebl S."/>
            <person name="Louis E.J."/>
            <person name="Maia e Silva A."/>
            <person name="Marck C."/>
            <person name="Monnier A.-L."/>
            <person name="Moestl D."/>
            <person name="Mueller S."/>
            <person name="Obermaier B."/>
            <person name="Oliver S.G."/>
            <person name="Pallier C."/>
            <person name="Pascolo S."/>
            <person name="Pfeiffer F."/>
            <person name="Philippsen P."/>
            <person name="Planta R.J."/>
            <person name="Pohl F.M."/>
            <person name="Pohl T.M."/>
            <person name="Poehlmann R."/>
            <person name="Portetelle D."/>
            <person name="Purnelle B."/>
            <person name="Puzos V."/>
            <person name="Ramezani Rad M."/>
            <person name="Rasmussen S.W."/>
            <person name="Remacha M.A."/>
            <person name="Revuelta J.L."/>
            <person name="Richard G.-F."/>
            <person name="Rieger M."/>
            <person name="Rodrigues-Pousada C."/>
            <person name="Rose M."/>
            <person name="Rupp T."/>
            <person name="Santos M.A."/>
            <person name="Schwager C."/>
            <person name="Sensen C."/>
            <person name="Skala J."/>
            <person name="Soares H."/>
            <person name="Sor F."/>
            <person name="Stegemann J."/>
            <person name="Tettelin H."/>
            <person name="Thierry A."/>
            <person name="Tzermia M."/>
            <person name="Urrestarazu L.A."/>
            <person name="van Dyck L."/>
            <person name="van Vliet-Reedijk J.C."/>
            <person name="Valens M."/>
            <person name="Vandenbol M."/>
            <person name="Vilela C."/>
            <person name="Vissers S."/>
            <person name="von Wettstein D."/>
            <person name="Voss H."/>
            <person name="Wiemann S."/>
            <person name="Xu G."/>
            <person name="Zimmermann J."/>
            <person name="Haasemann M."/>
            <person name="Becker I."/>
            <person name="Mewes H.-W."/>
        </authorList>
    </citation>
    <scope>NUCLEOTIDE SEQUENCE [LARGE SCALE GENOMIC DNA]</scope>
    <source>
        <strain>ATCC 204508 / S288c</strain>
    </source>
</reference>
<reference key="3">
    <citation type="journal article" date="2014" name="G3 (Bethesda)">
        <title>The reference genome sequence of Saccharomyces cerevisiae: Then and now.</title>
        <authorList>
            <person name="Engel S.R."/>
            <person name="Dietrich F.S."/>
            <person name="Fisk D.G."/>
            <person name="Binkley G."/>
            <person name="Balakrishnan R."/>
            <person name="Costanzo M.C."/>
            <person name="Dwight S.S."/>
            <person name="Hitz B.C."/>
            <person name="Karra K."/>
            <person name="Nash R.S."/>
            <person name="Weng S."/>
            <person name="Wong E.D."/>
            <person name="Lloyd P."/>
            <person name="Skrzypek M.S."/>
            <person name="Miyasato S.R."/>
            <person name="Simison M."/>
            <person name="Cherry J.M."/>
        </authorList>
    </citation>
    <scope>GENOME REANNOTATION</scope>
    <source>
        <strain>ATCC 204508 / S288c</strain>
    </source>
</reference>
<reference key="4">
    <citation type="journal article" date="1999" name="EMBO J.">
        <title>Identification by mass spectrometry and functional analysis of novel proteins of the yeast [U4/U6.U5] tri-snRNP.</title>
        <authorList>
            <person name="Gottschalk A."/>
            <person name="Neubauer G."/>
            <person name="Banroques J."/>
            <person name="Mann M."/>
            <person name="Luehrmann R."/>
            <person name="Fabrizio P."/>
        </authorList>
    </citation>
    <scope>SUBUNIT</scope>
    <scope>IDENTIFICATION IN THE U4/U5/U6 TRI-SNRNP COMPLEX</scope>
    <scope>IDENTIFICATION BY MASS SPECTROMETRY</scope>
</reference>
<reference key="5">
    <citation type="journal article" date="2002" name="Mol. Cell. Biol.">
        <title>Proteomics analysis reveals stable multiprotein complexes in both fission and budding yeasts containing Myb-related Cdc5p/Cef1p, novel pre-mRNA splicing factors, and snRNAs.</title>
        <authorList>
            <person name="Ohi M.D."/>
            <person name="Link A.J."/>
            <person name="Ren L."/>
            <person name="Jennings J.L."/>
            <person name="McDonald W.H."/>
            <person name="Gould K.L."/>
        </authorList>
    </citation>
    <scope>IDENTIFICATION IN THE CWC COMPLEX</scope>
    <scope>IDENTIFICATION BY MASS SPECTROMETRY</scope>
</reference>
<reference key="6">
    <citation type="submission" date="1994-02" db="EMBL/GenBank/DDBJ databases">
        <authorList>
            <person name="Akada R."/>
            <person name="Yamamoto J."/>
            <person name="Yamashita I."/>
        </authorList>
    </citation>
    <scope>NUCLEOTIDE SEQUENCE [GENOMIC DNA] OF 823-846</scope>
    <source>
        <strain>ATCC 26786 / X2180-1A</strain>
    </source>
</reference>
<reference key="7">
    <citation type="journal article" date="1997" name="EMBO J.">
        <title>An evolutionarily conserved U5 snRNP-specific protein is a GTP-binding factor closely related to the ribosomal translocase EF-2.</title>
        <authorList>
            <person name="Fabrizio P."/>
            <person name="Laggerbauer B."/>
            <person name="Lauber J."/>
            <person name="Lane W.S."/>
            <person name="Luehrmann R."/>
        </authorList>
    </citation>
    <scope>CHARACTERIZATION</scope>
</reference>
<reference key="8">
    <citation type="journal article" date="2003" name="Mol. Cell">
        <title>Assigning function to yeast proteins by integration of technologies.</title>
        <authorList>
            <person name="Hazbun T.R."/>
            <person name="Malmstroem L."/>
            <person name="Anderson S."/>
            <person name="Graczyk B.J."/>
            <person name="Fox B."/>
            <person name="Riffle M."/>
            <person name="Sundin B.A."/>
            <person name="Aranda J.D."/>
            <person name="McDonald W.H."/>
            <person name="Chiu C.-H."/>
            <person name="Snydsman B.E."/>
            <person name="Bradley P."/>
            <person name="Muller E.G.D."/>
            <person name="Fields S."/>
            <person name="Baker D."/>
            <person name="Yates J.R. III"/>
            <person name="Davis T.N."/>
        </authorList>
    </citation>
    <scope>IDENTIFICATION BY MASS SPECTROMETRY</scope>
</reference>
<reference key="9">
    <citation type="journal article" date="2003" name="Nature">
        <title>Global analysis of protein expression in yeast.</title>
        <authorList>
            <person name="Ghaemmaghami S."/>
            <person name="Huh W.-K."/>
            <person name="Bower K."/>
            <person name="Howson R.W."/>
            <person name="Belle A."/>
            <person name="Dephoure N."/>
            <person name="O'Shea E.K."/>
            <person name="Weissman J.S."/>
        </authorList>
    </citation>
    <scope>LEVEL OF PROTEIN EXPRESSION [LARGE SCALE ANALYSIS]</scope>
</reference>
<reference key="10">
    <citation type="journal article" date="2007" name="J. Proteome Res.">
        <title>Large-scale phosphorylation analysis of alpha-factor-arrested Saccharomyces cerevisiae.</title>
        <authorList>
            <person name="Li X."/>
            <person name="Gerber S.A."/>
            <person name="Rudner A.D."/>
            <person name="Beausoleil S.A."/>
            <person name="Haas W."/>
            <person name="Villen J."/>
            <person name="Elias J.E."/>
            <person name="Gygi S.P."/>
        </authorList>
    </citation>
    <scope>PHOSPHORYLATION [LARGE SCALE ANALYSIS] AT THR-88</scope>
    <scope>IDENTIFICATION BY MASS SPECTROMETRY [LARGE SCALE ANALYSIS]</scope>
    <source>
        <strain>ADR376</strain>
    </source>
</reference>
<reference key="11">
    <citation type="journal article" date="2008" name="Mol. Cell. Proteomics">
        <title>A multidimensional chromatography technology for in-depth phosphoproteome analysis.</title>
        <authorList>
            <person name="Albuquerque C.P."/>
            <person name="Smolka M.B."/>
            <person name="Payne S.H."/>
            <person name="Bafna V."/>
            <person name="Eng J."/>
            <person name="Zhou H."/>
        </authorList>
    </citation>
    <scope>PHOSPHORYLATION [LARGE SCALE ANALYSIS] AT THR-88</scope>
    <scope>IDENTIFICATION BY MASS SPECTROMETRY [LARGE SCALE ANALYSIS]</scope>
</reference>
<reference key="12">
    <citation type="journal article" date="2008" name="Nat. Struct. Mol. Biol.">
        <title>Localization of Prp8, Brr2, Snu114 and U4/U6 proteins in the yeast tri-snRNP by electron microscopy.</title>
        <authorList>
            <person name="Hacker I."/>
            <person name="Sander B."/>
            <person name="Golas M.M."/>
            <person name="Wolf E."/>
            <person name="Karagoz E."/>
            <person name="Kastner B."/>
            <person name="Stark H."/>
            <person name="Fabrizio P."/>
            <person name="Luhrmann R."/>
        </authorList>
    </citation>
    <scope>SUBUNIT</scope>
    <scope>IDENTIFICATION IN THE U4/U5/U6 TRI-SNRNP COMPLEX</scope>
    <scope>ELECTRON MICROSCOPY</scope>
</reference>
<reference key="13">
    <citation type="journal article" date="2009" name="RNA">
        <title>Physical and genetic interactions of yeast Cwc21p, an ortholog of human SRm300/SRRM2, suggest a role at the catalytic center of the spliceosome.</title>
        <authorList>
            <person name="Grainger R.J."/>
            <person name="Barrass J.D."/>
            <person name="Jacquier A."/>
            <person name="Rain J.-C."/>
            <person name="Beggs J.D."/>
        </authorList>
    </citation>
    <scope>INTERACTION WITH CWC21 AND PRP8</scope>
</reference>
<reference key="14">
    <citation type="journal article" date="2009" name="Science">
        <title>Global analysis of Cdk1 substrate phosphorylation sites provides insights into evolution.</title>
        <authorList>
            <person name="Holt L.J."/>
            <person name="Tuch B.B."/>
            <person name="Villen J."/>
            <person name="Johnson A.D."/>
            <person name="Gygi S.P."/>
            <person name="Morgan D.O."/>
        </authorList>
    </citation>
    <scope>PHOSPHORYLATION [LARGE SCALE ANALYSIS] AT SER-85 AND THR-88</scope>
    <scope>IDENTIFICATION BY MASS SPECTROMETRY [LARGE SCALE ANALYSIS]</scope>
</reference>
<dbReference type="EMBL" id="Z26878">
    <property type="protein sequence ID" value="CAA81514.1"/>
    <property type="molecule type" value="Genomic_DNA"/>
</dbReference>
<dbReference type="EMBL" id="Z28173">
    <property type="protein sequence ID" value="CAA82015.1"/>
    <property type="molecule type" value="Genomic_DNA"/>
</dbReference>
<dbReference type="EMBL" id="D28149">
    <property type="protein sequence ID" value="BAA05682.1"/>
    <property type="molecule type" value="Genomic_DNA"/>
</dbReference>
<dbReference type="EMBL" id="BK006944">
    <property type="protein sequence ID" value="DAA08993.1"/>
    <property type="molecule type" value="Genomic_DNA"/>
</dbReference>
<dbReference type="PIR" id="S38003">
    <property type="entry name" value="S38003"/>
</dbReference>
<dbReference type="RefSeq" id="NP_012748.1">
    <property type="nucleotide sequence ID" value="NM_001179739.1"/>
</dbReference>
<dbReference type="PDB" id="3JCM">
    <property type="method" value="EM"/>
    <property type="resolution" value="3.80 A"/>
    <property type="chains" value="H=1-1008"/>
</dbReference>
<dbReference type="PDB" id="5GAM">
    <property type="method" value="EM"/>
    <property type="resolution" value="3.70 A"/>
    <property type="chains" value="C=1-1008"/>
</dbReference>
<dbReference type="PDB" id="5GAN">
    <property type="method" value="EM"/>
    <property type="resolution" value="3.60 A"/>
    <property type="chains" value="C=1-1008"/>
</dbReference>
<dbReference type="PDB" id="5GM6">
    <property type="method" value="EM"/>
    <property type="resolution" value="3.50 A"/>
    <property type="chains" value="C=1-1008"/>
</dbReference>
<dbReference type="PDB" id="5GMK">
    <property type="method" value="EM"/>
    <property type="resolution" value="3.40 A"/>
    <property type="chains" value="C=1-1008"/>
</dbReference>
<dbReference type="PDB" id="5LJ3">
    <property type="method" value="EM"/>
    <property type="resolution" value="3.80 A"/>
    <property type="chains" value="C=1-1008"/>
</dbReference>
<dbReference type="PDB" id="5LJ5">
    <property type="method" value="EM"/>
    <property type="resolution" value="3.80 A"/>
    <property type="chains" value="C=1-1008"/>
</dbReference>
<dbReference type="PDB" id="5LQW">
    <property type="method" value="EM"/>
    <property type="resolution" value="5.80 A"/>
    <property type="chains" value="B=1-1008"/>
</dbReference>
<dbReference type="PDB" id="5MPS">
    <property type="method" value="EM"/>
    <property type="resolution" value="3.85 A"/>
    <property type="chains" value="C=1-1008"/>
</dbReference>
<dbReference type="PDB" id="5MQ0">
    <property type="method" value="EM"/>
    <property type="resolution" value="4.17 A"/>
    <property type="chains" value="C=1-1008"/>
</dbReference>
<dbReference type="PDB" id="5NRL">
    <property type="method" value="EM"/>
    <property type="resolution" value="7.20 A"/>
    <property type="chains" value="C=1-1008"/>
</dbReference>
<dbReference type="PDB" id="5WSG">
    <property type="method" value="EM"/>
    <property type="resolution" value="4.00 A"/>
    <property type="chains" value="C=1-1008"/>
</dbReference>
<dbReference type="PDB" id="5Y88">
    <property type="method" value="EM"/>
    <property type="resolution" value="3.70 A"/>
    <property type="chains" value="C=1-1008"/>
</dbReference>
<dbReference type="PDB" id="5YLZ">
    <property type="method" value="EM"/>
    <property type="resolution" value="3.60 A"/>
    <property type="chains" value="C=1-1008"/>
</dbReference>
<dbReference type="PDB" id="5ZWM">
    <property type="method" value="EM"/>
    <property type="resolution" value="3.40 A"/>
    <property type="chains" value="C=1-1008"/>
</dbReference>
<dbReference type="PDB" id="5ZWO">
    <property type="method" value="EM"/>
    <property type="resolution" value="3.90 A"/>
    <property type="chains" value="C=1-1008"/>
</dbReference>
<dbReference type="PDB" id="6BK8">
    <property type="method" value="EM"/>
    <property type="resolution" value="3.30 A"/>
    <property type="chains" value="B=1-1008"/>
</dbReference>
<dbReference type="PDB" id="6EXN">
    <property type="method" value="EM"/>
    <property type="resolution" value="3.70 A"/>
    <property type="chains" value="C=1-1008"/>
</dbReference>
<dbReference type="PDB" id="6J6G">
    <property type="method" value="EM"/>
    <property type="resolution" value="3.20 A"/>
    <property type="chains" value="C=1-1008"/>
</dbReference>
<dbReference type="PDB" id="6J6H">
    <property type="method" value="EM"/>
    <property type="resolution" value="3.60 A"/>
    <property type="chains" value="C=1-1008"/>
</dbReference>
<dbReference type="PDB" id="6J6N">
    <property type="method" value="EM"/>
    <property type="resolution" value="3.86 A"/>
    <property type="chains" value="C=1-1008"/>
</dbReference>
<dbReference type="PDB" id="6J6Q">
    <property type="method" value="EM"/>
    <property type="resolution" value="3.70 A"/>
    <property type="chains" value="C=1-1008"/>
</dbReference>
<dbReference type="PDB" id="6TEO">
    <property type="method" value="X-ray"/>
    <property type="resolution" value="3.10 A"/>
    <property type="chains" value="A/C=72-1008"/>
</dbReference>
<dbReference type="PDB" id="9DTR">
    <property type="method" value="EM"/>
    <property type="resolution" value="2.31 A"/>
    <property type="chains" value="C=1-1008"/>
</dbReference>
<dbReference type="PDBsum" id="3JCM"/>
<dbReference type="PDBsum" id="5GAM"/>
<dbReference type="PDBsum" id="5GAN"/>
<dbReference type="PDBsum" id="5GM6"/>
<dbReference type="PDBsum" id="5GMK"/>
<dbReference type="PDBsum" id="5LJ3"/>
<dbReference type="PDBsum" id="5LJ5"/>
<dbReference type="PDBsum" id="5LQW"/>
<dbReference type="PDBsum" id="5MPS"/>
<dbReference type="PDBsum" id="5MQ0"/>
<dbReference type="PDBsum" id="5NRL"/>
<dbReference type="PDBsum" id="5WSG"/>
<dbReference type="PDBsum" id="5Y88"/>
<dbReference type="PDBsum" id="5YLZ"/>
<dbReference type="PDBsum" id="5ZWM"/>
<dbReference type="PDBsum" id="5ZWO"/>
<dbReference type="PDBsum" id="6BK8"/>
<dbReference type="PDBsum" id="6EXN"/>
<dbReference type="PDBsum" id="6J6G"/>
<dbReference type="PDBsum" id="6J6H"/>
<dbReference type="PDBsum" id="6J6N"/>
<dbReference type="PDBsum" id="6J6Q"/>
<dbReference type="PDBsum" id="6TEO"/>
<dbReference type="PDBsum" id="9DTR"/>
<dbReference type="EMDB" id="EMD-0686"/>
<dbReference type="EMDB" id="EMD-0687"/>
<dbReference type="EMDB" id="EMD-0691"/>
<dbReference type="EMDB" id="EMD-0692"/>
<dbReference type="EMDB" id="EMD-3539"/>
<dbReference type="EMDB" id="EMD-3541"/>
<dbReference type="EMDB" id="EMD-3683"/>
<dbReference type="EMDB" id="EMD-3979"/>
<dbReference type="EMDB" id="EMD-4055"/>
<dbReference type="EMDB" id="EMD-4057"/>
<dbReference type="EMDB" id="EMD-47157"/>
<dbReference type="EMDB" id="EMD-6817"/>
<dbReference type="EMDB" id="EMD-6839"/>
<dbReference type="EMDB" id="EMD-6972"/>
<dbReference type="EMDB" id="EMD-6974"/>
<dbReference type="EMDB" id="EMD-7109"/>
<dbReference type="EMDB" id="EMD-8011"/>
<dbReference type="EMDB" id="EMD-8012"/>
<dbReference type="EMDB" id="EMD-9524"/>
<dbReference type="EMDB" id="EMD-9525"/>
<dbReference type="SMR" id="P36048"/>
<dbReference type="BioGRID" id="33965">
    <property type="interactions" value="445"/>
</dbReference>
<dbReference type="ComplexPortal" id="CPX-1651">
    <property type="entry name" value="PRP19-associated complex"/>
</dbReference>
<dbReference type="ComplexPortal" id="CPX-25">
    <property type="entry name" value="U4/U6.U5 tri-small nuclear ribonucleoprotein complex"/>
</dbReference>
<dbReference type="ComplexPortal" id="CPX-29">
    <property type="entry name" value="U5 small nuclear ribonucleoprotein complex"/>
</dbReference>
<dbReference type="ComplexPortal" id="CPX-30">
    <property type="entry name" value="U5 small nuclear ribonucleoprotein complex, AAR2 variant"/>
</dbReference>
<dbReference type="DIP" id="DIP-759N"/>
<dbReference type="FunCoup" id="P36048">
    <property type="interactions" value="337"/>
</dbReference>
<dbReference type="IntAct" id="P36048">
    <property type="interactions" value="76"/>
</dbReference>
<dbReference type="MINT" id="P36048"/>
<dbReference type="STRING" id="4932.YKL173W"/>
<dbReference type="iPTMnet" id="P36048"/>
<dbReference type="PaxDb" id="4932-YKL173W"/>
<dbReference type="PeptideAtlas" id="P36048"/>
<dbReference type="EnsemblFungi" id="YKL173W_mRNA">
    <property type="protein sequence ID" value="YKL173W"/>
    <property type="gene ID" value="YKL173W"/>
</dbReference>
<dbReference type="GeneID" id="853681"/>
<dbReference type="KEGG" id="sce:YKL173W"/>
<dbReference type="AGR" id="SGD:S000001656"/>
<dbReference type="SGD" id="S000001656">
    <property type="gene designation" value="SNU114"/>
</dbReference>
<dbReference type="VEuPathDB" id="FungiDB:YKL173W"/>
<dbReference type="eggNOG" id="KOG0468">
    <property type="taxonomic scope" value="Eukaryota"/>
</dbReference>
<dbReference type="GeneTree" id="ENSGT00940000155685"/>
<dbReference type="HOGENOM" id="CLU_002794_11_2_1"/>
<dbReference type="InParanoid" id="P36048"/>
<dbReference type="OMA" id="YIFRPIR"/>
<dbReference type="OrthoDB" id="364892at2759"/>
<dbReference type="BioCyc" id="YEAST:G3O-31940-MONOMER"/>
<dbReference type="BioGRID-ORCS" id="853681">
    <property type="hits" value="4 hits in 10 CRISPR screens"/>
</dbReference>
<dbReference type="EvolutionaryTrace" id="P36048"/>
<dbReference type="PRO" id="PR:P36048"/>
<dbReference type="Proteomes" id="UP000002311">
    <property type="component" value="Chromosome XI"/>
</dbReference>
<dbReference type="RNAct" id="P36048">
    <property type="molecule type" value="protein"/>
</dbReference>
<dbReference type="GO" id="GO:0005737">
    <property type="term" value="C:cytoplasm"/>
    <property type="evidence" value="ECO:0000303"/>
    <property type="project" value="ComplexPortal"/>
</dbReference>
<dbReference type="GO" id="GO:0005829">
    <property type="term" value="C:cytosol"/>
    <property type="evidence" value="ECO:0000318"/>
    <property type="project" value="GO_Central"/>
</dbReference>
<dbReference type="GO" id="GO:0005634">
    <property type="term" value="C:nucleus"/>
    <property type="evidence" value="ECO:0007005"/>
    <property type="project" value="SGD"/>
</dbReference>
<dbReference type="GO" id="GO:0000974">
    <property type="term" value="C:Prp19 complex"/>
    <property type="evidence" value="ECO:0000353"/>
    <property type="project" value="ComplexPortal"/>
</dbReference>
<dbReference type="GO" id="GO:0005681">
    <property type="term" value="C:spliceosomal complex"/>
    <property type="evidence" value="ECO:0000303"/>
    <property type="project" value="ComplexPortal"/>
</dbReference>
<dbReference type="GO" id="GO:0071007">
    <property type="term" value="C:U2-type catalytic step 2 spliceosome"/>
    <property type="evidence" value="ECO:0000318"/>
    <property type="project" value="GO_Central"/>
</dbReference>
<dbReference type="GO" id="GO:0046540">
    <property type="term" value="C:U4/U6 x U5 tri-snRNP complex"/>
    <property type="evidence" value="ECO:0000314"/>
    <property type="project" value="SGD"/>
</dbReference>
<dbReference type="GO" id="GO:0005682">
    <property type="term" value="C:U5 snRNP"/>
    <property type="evidence" value="ECO:0000314"/>
    <property type="project" value="SGD"/>
</dbReference>
<dbReference type="GO" id="GO:0005525">
    <property type="term" value="F:GTP binding"/>
    <property type="evidence" value="ECO:0007669"/>
    <property type="project" value="UniProtKB-KW"/>
</dbReference>
<dbReference type="GO" id="GO:0003924">
    <property type="term" value="F:GTPase activity"/>
    <property type="evidence" value="ECO:0000315"/>
    <property type="project" value="SGD"/>
</dbReference>
<dbReference type="GO" id="GO:0030623">
    <property type="term" value="F:U5 snRNA binding"/>
    <property type="evidence" value="ECO:0000314"/>
    <property type="project" value="SGD"/>
</dbReference>
<dbReference type="GO" id="GO:0000349">
    <property type="term" value="P:generation of catalytic spliceosome for first transesterification step"/>
    <property type="evidence" value="ECO:0000316"/>
    <property type="project" value="SGD"/>
</dbReference>
<dbReference type="GO" id="GO:0000398">
    <property type="term" value="P:mRNA splicing, via spliceosome"/>
    <property type="evidence" value="ECO:0000315"/>
    <property type="project" value="SGD"/>
</dbReference>
<dbReference type="GO" id="GO:0000387">
    <property type="term" value="P:spliceosomal snRNP assembly"/>
    <property type="evidence" value="ECO:0000303"/>
    <property type="project" value="ComplexPortal"/>
</dbReference>
<dbReference type="GO" id="GO:0000244">
    <property type="term" value="P:spliceosomal tri-snRNP complex assembly"/>
    <property type="evidence" value="ECO:0000315"/>
    <property type="project" value="SGD"/>
</dbReference>
<dbReference type="GO" id="GO:0000388">
    <property type="term" value="P:spliceosome conformational change to release U4 (or U4atac) and U1 (or U11)"/>
    <property type="evidence" value="ECO:0000315"/>
    <property type="project" value="SGD"/>
</dbReference>
<dbReference type="CDD" id="cd04098">
    <property type="entry name" value="eEF2_C_snRNP"/>
    <property type="match status" value="1"/>
</dbReference>
<dbReference type="CDD" id="cd04090">
    <property type="entry name" value="EF2_II_snRNP"/>
    <property type="match status" value="1"/>
</dbReference>
<dbReference type="CDD" id="cd01683">
    <property type="entry name" value="EF2_IV_snRNP"/>
    <property type="match status" value="1"/>
</dbReference>
<dbReference type="CDD" id="cd16264">
    <property type="entry name" value="snRNP_III"/>
    <property type="match status" value="1"/>
</dbReference>
<dbReference type="CDD" id="cd04167">
    <property type="entry name" value="Snu114p"/>
    <property type="match status" value="1"/>
</dbReference>
<dbReference type="FunFam" id="3.30.70.870:FF:000002">
    <property type="entry name" value="Translation elongation factor 2"/>
    <property type="match status" value="1"/>
</dbReference>
<dbReference type="FunFam" id="3.40.50.300:FF:000646">
    <property type="entry name" value="U5 small nuclear ribonucleoprotein component"/>
    <property type="match status" value="1"/>
</dbReference>
<dbReference type="FunFam" id="2.40.30.10:FF:000214">
    <property type="entry name" value="U5 snRNP-specific protein"/>
    <property type="match status" value="1"/>
</dbReference>
<dbReference type="FunFam" id="3.30.70.240:FF:000022">
    <property type="entry name" value="U5 snRNP-specific protein"/>
    <property type="match status" value="1"/>
</dbReference>
<dbReference type="Gene3D" id="3.30.230.10">
    <property type="match status" value="1"/>
</dbReference>
<dbReference type="Gene3D" id="3.30.70.240">
    <property type="match status" value="1"/>
</dbReference>
<dbReference type="Gene3D" id="3.30.70.870">
    <property type="entry name" value="Elongation Factor G (Translational Gtpase), domain 3"/>
    <property type="match status" value="1"/>
</dbReference>
<dbReference type="Gene3D" id="3.40.50.300">
    <property type="entry name" value="P-loop containing nucleotide triphosphate hydrolases"/>
    <property type="match status" value="1"/>
</dbReference>
<dbReference type="Gene3D" id="2.40.30.10">
    <property type="entry name" value="Translation factors"/>
    <property type="match status" value="1"/>
</dbReference>
<dbReference type="Gene3D" id="3.90.1430.10">
    <property type="entry name" value="Yeast translation eEF2 (G' domain)"/>
    <property type="match status" value="1"/>
</dbReference>
<dbReference type="InterPro" id="IPR035647">
    <property type="entry name" value="EFG_III/V"/>
</dbReference>
<dbReference type="InterPro" id="IPR000640">
    <property type="entry name" value="EFG_V-like"/>
</dbReference>
<dbReference type="InterPro" id="IPR031950">
    <property type="entry name" value="EFTUD2_N"/>
</dbReference>
<dbReference type="InterPro" id="IPR027417">
    <property type="entry name" value="P-loop_NTPase"/>
</dbReference>
<dbReference type="InterPro" id="IPR020568">
    <property type="entry name" value="Ribosomal_Su5_D2-typ_SF"/>
</dbReference>
<dbReference type="InterPro" id="IPR014721">
    <property type="entry name" value="Ribsml_uS5_D2-typ_fold_subgr"/>
</dbReference>
<dbReference type="InterPro" id="IPR044121">
    <property type="entry name" value="Snu114_GTP-bd"/>
</dbReference>
<dbReference type="InterPro" id="IPR000795">
    <property type="entry name" value="T_Tr_GTP-bd_dom"/>
</dbReference>
<dbReference type="InterPro" id="IPR009000">
    <property type="entry name" value="Transl_B-barrel_sf"/>
</dbReference>
<dbReference type="InterPro" id="IPR005517">
    <property type="entry name" value="Transl_elong_EFG/EF2_IV"/>
</dbReference>
<dbReference type="InterPro" id="IPR035655">
    <property type="entry name" value="U5-116kDa_C"/>
</dbReference>
<dbReference type="PANTHER" id="PTHR42908:SF6">
    <property type="entry name" value="116 KDA U5 SMALL NUCLEAR RIBONUCLEOPROTEIN COMPONENT"/>
    <property type="match status" value="1"/>
</dbReference>
<dbReference type="PANTHER" id="PTHR42908">
    <property type="entry name" value="TRANSLATION ELONGATION FACTOR-RELATED"/>
    <property type="match status" value="1"/>
</dbReference>
<dbReference type="Pfam" id="PF00679">
    <property type="entry name" value="EFG_C"/>
    <property type="match status" value="1"/>
</dbReference>
<dbReference type="Pfam" id="PF03764">
    <property type="entry name" value="EFG_IV"/>
    <property type="match status" value="1"/>
</dbReference>
<dbReference type="Pfam" id="PF16004">
    <property type="entry name" value="EFTUD2"/>
    <property type="match status" value="1"/>
</dbReference>
<dbReference type="Pfam" id="PF00009">
    <property type="entry name" value="GTP_EFTU"/>
    <property type="match status" value="1"/>
</dbReference>
<dbReference type="PRINTS" id="PR00315">
    <property type="entry name" value="ELONGATNFCT"/>
</dbReference>
<dbReference type="SMART" id="SM00838">
    <property type="entry name" value="EFG_C"/>
    <property type="match status" value="1"/>
</dbReference>
<dbReference type="SMART" id="SM00889">
    <property type="entry name" value="EFG_IV"/>
    <property type="match status" value="1"/>
</dbReference>
<dbReference type="SUPFAM" id="SSF54980">
    <property type="entry name" value="EF-G C-terminal domain-like"/>
    <property type="match status" value="2"/>
</dbReference>
<dbReference type="SUPFAM" id="SSF52540">
    <property type="entry name" value="P-loop containing nucleoside triphosphate hydrolases"/>
    <property type="match status" value="1"/>
</dbReference>
<dbReference type="SUPFAM" id="SSF54211">
    <property type="entry name" value="Ribosomal protein S5 domain 2-like"/>
    <property type="match status" value="1"/>
</dbReference>
<dbReference type="SUPFAM" id="SSF50447">
    <property type="entry name" value="Translation proteins"/>
    <property type="match status" value="1"/>
</dbReference>
<dbReference type="PROSITE" id="PS51722">
    <property type="entry name" value="G_TR_2"/>
    <property type="match status" value="1"/>
</dbReference>
<proteinExistence type="evidence at protein level"/>
<accession>P36048</accession>
<accession>D6VX27</accession>
<sequence length="1008" mass="114041">MEGDDLFDEFGNLIGVDPFDSDEEESVLDEQEQYQTNTFEGSGNNNEIESRQLTSLGSKKELGISLEHPYGKEVEVLMETKNTQSPQTPLVEPVTERTKLQEHTIFTQLKKNIPKTRYNRDYMLSMANIPERIINVGVIGPLHSGKTSLMDLLVIDSHKRIPDMSKNVELGWKPLRYLDNLKQEIDRGLSIKLNGSTLLCTDLESKSRMINFLDAPGHVNFMDETAVALAASDLVLIVIDVVEGVTFVVEQLIKQSIKNNVAMCFVINKLDRLILDLKLPPMDAYLKLNHIIANINSFTKGNVFSPIDNNIIFASTKLGFTFTIKEFVSYYYAHSIPSSKIDDFTTRLWGSVYYHKGNFRTKPFENVEKYPTFVEFILIPLYKIFSYALSMEKDKLKNLLRSNFRVNLSQEALQYDPQPFLKHVLQLIFRQQTGLVDAITRCYQPFELFDNKTAHLSIPGKSTPEGTLWAHVLKTVDYGGAEWSLVRIYSGLLKRGDTVRILDTSQSESRQKRQLHDISKTETSNEDEDEDDETPSCEVEEIGLLGGRYVYPVHEAHKGQIVLIKGISSAYIKSATLYSVKSKEDMKQLKFFKPLDYITEAVFKIVLQPLLPRELPKLLDALNKISKYYPGVIIKVEESGEHVILGNGELYMDCLLYDLRASYAKIEIKISDPLTVFSESCSNESFASIPVSNSISRLGEENLPGLSISVAAEPMDSKMIQDLSRNTLGKGQNCLDIDGIMDNPRKLSKILRTEYGWDSLASRNVWSFYNGNVLINDTLPDEISPELLSKYKEQIIQGFYWAVKEGPLAEEPIYGVQYKLLSISVPSDVNIDVMKSQIIPLMKKACYVGLLTAIPILLEPIYEVDITVHAPLLPIVEELMKKRRGSRIYKTIKVAGTPLLEVRGQVPVIESAGFETDLRLSTNGLGMCQLYFWHKIWRKVPGDVLDKDAFIPKLKPAPINSLSRDFVMKTRRRKGISTGGFMSNDGPTLEKYISAELYAQLRENGLVP</sequence>
<protein>
    <recommendedName>
        <fullName>Pre-mRNA-splicing factor SNU114</fullName>
    </recommendedName>
    <alternativeName>
        <fullName>114 kDa U5 small nuclear ribonucleoprotein component</fullName>
    </alternativeName>
    <alternativeName>
        <fullName>Growth inhibitory protein 10</fullName>
    </alternativeName>
</protein>
<organism>
    <name type="scientific">Saccharomyces cerevisiae (strain ATCC 204508 / S288c)</name>
    <name type="common">Baker's yeast</name>
    <dbReference type="NCBI Taxonomy" id="559292"/>
    <lineage>
        <taxon>Eukaryota</taxon>
        <taxon>Fungi</taxon>
        <taxon>Dikarya</taxon>
        <taxon>Ascomycota</taxon>
        <taxon>Saccharomycotina</taxon>
        <taxon>Saccharomycetes</taxon>
        <taxon>Saccharomycetales</taxon>
        <taxon>Saccharomycetaceae</taxon>
        <taxon>Saccharomyces</taxon>
    </lineage>
</organism>